<protein>
    <recommendedName>
        <fullName evidence="1">Phosphoribosylformylglycinamidine synthase subunit PurL</fullName>
        <shortName evidence="1">FGAM synthase</shortName>
        <ecNumber evidence="1">6.3.5.3</ecNumber>
    </recommendedName>
    <alternativeName>
        <fullName evidence="1">Formylglycinamide ribonucleotide amidotransferase subunit II</fullName>
        <shortName evidence="1">FGAR amidotransferase II</shortName>
        <shortName evidence="1">FGAR-AT II</shortName>
    </alternativeName>
    <alternativeName>
        <fullName evidence="1">Glutamine amidotransferase PurL</fullName>
    </alternativeName>
    <alternativeName>
        <fullName evidence="1">Phosphoribosylformylglycinamidine synthase subunit II</fullName>
    </alternativeName>
</protein>
<gene>
    <name evidence="1" type="primary">purL</name>
    <name type="ordered locus">LBL_0835</name>
</gene>
<feature type="chain" id="PRO_1000050317" description="Phosphoribosylformylglycinamidine synthase subunit PurL">
    <location>
        <begin position="1"/>
        <end position="745"/>
    </location>
</feature>
<feature type="active site" evidence="1">
    <location>
        <position position="47"/>
    </location>
</feature>
<feature type="active site" description="Proton acceptor" evidence="1">
    <location>
        <position position="94"/>
    </location>
</feature>
<feature type="binding site" evidence="1">
    <location>
        <position position="50"/>
    </location>
    <ligand>
        <name>ATP</name>
        <dbReference type="ChEBI" id="CHEBI:30616"/>
    </ligand>
</feature>
<feature type="binding site" evidence="1">
    <location>
        <position position="90"/>
    </location>
    <ligand>
        <name>ATP</name>
        <dbReference type="ChEBI" id="CHEBI:30616"/>
    </ligand>
</feature>
<feature type="binding site" evidence="1">
    <location>
        <position position="92"/>
    </location>
    <ligand>
        <name>Mg(2+)</name>
        <dbReference type="ChEBI" id="CHEBI:18420"/>
        <label>1</label>
    </ligand>
</feature>
<feature type="binding site" evidence="1">
    <location>
        <begin position="93"/>
        <end position="96"/>
    </location>
    <ligand>
        <name>substrate</name>
    </ligand>
</feature>
<feature type="binding site" evidence="1">
    <location>
        <position position="115"/>
    </location>
    <ligand>
        <name>substrate</name>
    </ligand>
</feature>
<feature type="binding site" evidence="1">
    <location>
        <position position="116"/>
    </location>
    <ligand>
        <name>Mg(2+)</name>
        <dbReference type="ChEBI" id="CHEBI:18420"/>
        <label>2</label>
    </ligand>
</feature>
<feature type="binding site" evidence="1">
    <location>
        <position position="240"/>
    </location>
    <ligand>
        <name>substrate</name>
    </ligand>
</feature>
<feature type="binding site" evidence="1">
    <location>
        <position position="268"/>
    </location>
    <ligand>
        <name>Mg(2+)</name>
        <dbReference type="ChEBI" id="CHEBI:18420"/>
        <label>2</label>
    </ligand>
</feature>
<feature type="binding site" evidence="1">
    <location>
        <begin position="312"/>
        <end position="314"/>
    </location>
    <ligand>
        <name>substrate</name>
    </ligand>
</feature>
<feature type="binding site" evidence="1">
    <location>
        <position position="501"/>
    </location>
    <ligand>
        <name>ATP</name>
        <dbReference type="ChEBI" id="CHEBI:30616"/>
    </ligand>
</feature>
<feature type="binding site" evidence="1">
    <location>
        <position position="538"/>
    </location>
    <ligand>
        <name>ATP</name>
        <dbReference type="ChEBI" id="CHEBI:30616"/>
    </ligand>
</feature>
<feature type="binding site" evidence="1">
    <location>
        <position position="539"/>
    </location>
    <ligand>
        <name>Mg(2+)</name>
        <dbReference type="ChEBI" id="CHEBI:18420"/>
        <label>1</label>
    </ligand>
</feature>
<feature type="binding site" evidence="1">
    <location>
        <position position="541"/>
    </location>
    <ligand>
        <name>substrate</name>
    </ligand>
</feature>
<comment type="function">
    <text evidence="1">Part of the phosphoribosylformylglycinamidine synthase complex involved in the purines biosynthetic pathway. Catalyzes the ATP-dependent conversion of formylglycinamide ribonucleotide (FGAR) and glutamine to yield formylglycinamidine ribonucleotide (FGAM) and glutamate. The FGAM synthase complex is composed of three subunits. PurQ produces an ammonia molecule by converting glutamine to glutamate. PurL transfers the ammonia molecule to FGAR to form FGAM in an ATP-dependent manner. PurS interacts with PurQ and PurL and is thought to assist in the transfer of the ammonia molecule from PurQ to PurL.</text>
</comment>
<comment type="catalytic activity">
    <reaction evidence="1">
        <text>N(2)-formyl-N(1)-(5-phospho-beta-D-ribosyl)glycinamide + L-glutamine + ATP + H2O = 2-formamido-N(1)-(5-O-phospho-beta-D-ribosyl)acetamidine + L-glutamate + ADP + phosphate + H(+)</text>
        <dbReference type="Rhea" id="RHEA:17129"/>
        <dbReference type="ChEBI" id="CHEBI:15377"/>
        <dbReference type="ChEBI" id="CHEBI:15378"/>
        <dbReference type="ChEBI" id="CHEBI:29985"/>
        <dbReference type="ChEBI" id="CHEBI:30616"/>
        <dbReference type="ChEBI" id="CHEBI:43474"/>
        <dbReference type="ChEBI" id="CHEBI:58359"/>
        <dbReference type="ChEBI" id="CHEBI:147286"/>
        <dbReference type="ChEBI" id="CHEBI:147287"/>
        <dbReference type="ChEBI" id="CHEBI:456216"/>
        <dbReference type="EC" id="6.3.5.3"/>
    </reaction>
</comment>
<comment type="pathway">
    <text evidence="1">Purine metabolism; IMP biosynthesis via de novo pathway; 5-amino-1-(5-phospho-D-ribosyl)imidazole from N(2)-formyl-N(1)-(5-phospho-D-ribosyl)glycinamide: step 1/2.</text>
</comment>
<comment type="subunit">
    <text evidence="1">Monomer. Part of the FGAM synthase complex composed of 1 PurL, 1 PurQ and 2 PurS subunits.</text>
</comment>
<comment type="subcellular location">
    <subcellularLocation>
        <location evidence="1">Cytoplasm</location>
    </subcellularLocation>
</comment>
<comment type="similarity">
    <text evidence="1">Belongs to the FGAMS family.</text>
</comment>
<name>PURL_LEPBL</name>
<sequence length="745" mass="80358">MEKDVVSLQDALEHGLTAEEFQKIQEILGRIPNSTELGIFSAMWSEHCSYKNSVLKLKTLPTSSDKLLAKAGEENAGAMDIGDGLAVVFKIESHNHPTAVEPYQGAATGVGGIMRDIFTMGARPIVSLNSLRFGNPDEPRNKYLLSRAVKGIGDYGNSLGIAVSGGELFIDECFSKNPLVNAMTVGIVRHDQMASATTGGQVGNAVYIVGATTGRDGIHGASFASKDLSKESESKRSAVQVGDPFMEKLLMEASLEAIQKGLLIGIQDMGAAGISCATSEMSAKGKTGMKIDLDLVPFRETGMNAYEVMLSESQERMLVVPKKGKESELVSIFEKWNLNAVRIGEVTADGFIEIYMGGKLKAHIPAESLVLGGGAPRYERETKRPSYLDAVKTWKPNSILDITPGANTKDVLLNILSSWNVCSRKPITEQYDSEVGLVKLIGPGLDGGLSSIPDTNKALATATDCNSRYTYLDPYKGAQFAVCEAARNVYVTGATPYGVTNNLNFANPYIPENYYMFSECIRGMGDACRFLGLPVTGGNVSFYNESPEGPIFPTPTIGMVGILQDKKKFLSNFPKEVGIELAVLGNFRPSLGGSEYLKKIHGQVNGSIPEIDIKEELELCKLILSLNEKGALKSARDLSLGGIGIALSKTILFSGLGIDAELIAFKQSRLDLTLFGESSTTVLVGFDSSWKEKIREQTEEKGLKFYPVGKTTSSELLKLKDIGVEVSFSELNGPYEKGLEVVFAL</sequence>
<reference key="1">
    <citation type="journal article" date="2006" name="Proc. Natl. Acad. Sci. U.S.A.">
        <title>Genome reduction in Leptospira borgpetersenii reflects limited transmission potential.</title>
        <authorList>
            <person name="Bulach D.M."/>
            <person name="Zuerner R.L."/>
            <person name="Wilson P."/>
            <person name="Seemann T."/>
            <person name="McGrath A."/>
            <person name="Cullen P.A."/>
            <person name="Davis J."/>
            <person name="Johnson M."/>
            <person name="Kuczek E."/>
            <person name="Alt D.P."/>
            <person name="Peterson-Burch B."/>
            <person name="Coppel R.L."/>
            <person name="Rood J.I."/>
            <person name="Davies J.K."/>
            <person name="Adler B."/>
        </authorList>
    </citation>
    <scope>NUCLEOTIDE SEQUENCE [LARGE SCALE GENOMIC DNA]</scope>
    <source>
        <strain>L550</strain>
    </source>
</reference>
<evidence type="ECO:0000255" key="1">
    <source>
        <dbReference type="HAMAP-Rule" id="MF_00420"/>
    </source>
</evidence>
<keyword id="KW-0067">ATP-binding</keyword>
<keyword id="KW-0963">Cytoplasm</keyword>
<keyword id="KW-0436">Ligase</keyword>
<keyword id="KW-0460">Magnesium</keyword>
<keyword id="KW-0479">Metal-binding</keyword>
<keyword id="KW-0547">Nucleotide-binding</keyword>
<keyword id="KW-0658">Purine biosynthesis</keyword>
<organism>
    <name type="scientific">Leptospira borgpetersenii serovar Hardjo-bovis (strain L550)</name>
    <dbReference type="NCBI Taxonomy" id="355276"/>
    <lineage>
        <taxon>Bacteria</taxon>
        <taxon>Pseudomonadati</taxon>
        <taxon>Spirochaetota</taxon>
        <taxon>Spirochaetia</taxon>
        <taxon>Leptospirales</taxon>
        <taxon>Leptospiraceae</taxon>
        <taxon>Leptospira</taxon>
    </lineage>
</organism>
<dbReference type="EC" id="6.3.5.3" evidence="1"/>
<dbReference type="EMBL" id="CP000348">
    <property type="protein sequence ID" value="ABJ78390.1"/>
    <property type="molecule type" value="Genomic_DNA"/>
</dbReference>
<dbReference type="RefSeq" id="WP_011669693.1">
    <property type="nucleotide sequence ID" value="NC_008508.1"/>
</dbReference>
<dbReference type="SMR" id="Q053V5"/>
<dbReference type="KEGG" id="lbl:LBL_0835"/>
<dbReference type="HOGENOM" id="CLU_003100_0_1_12"/>
<dbReference type="UniPathway" id="UPA00074">
    <property type="reaction ID" value="UER00128"/>
</dbReference>
<dbReference type="GO" id="GO:0005737">
    <property type="term" value="C:cytoplasm"/>
    <property type="evidence" value="ECO:0007669"/>
    <property type="project" value="UniProtKB-SubCell"/>
</dbReference>
<dbReference type="GO" id="GO:0005524">
    <property type="term" value="F:ATP binding"/>
    <property type="evidence" value="ECO:0007669"/>
    <property type="project" value="UniProtKB-UniRule"/>
</dbReference>
<dbReference type="GO" id="GO:0000287">
    <property type="term" value="F:magnesium ion binding"/>
    <property type="evidence" value="ECO:0007669"/>
    <property type="project" value="UniProtKB-UniRule"/>
</dbReference>
<dbReference type="GO" id="GO:0004642">
    <property type="term" value="F:phosphoribosylformylglycinamidine synthase activity"/>
    <property type="evidence" value="ECO:0007669"/>
    <property type="project" value="UniProtKB-UniRule"/>
</dbReference>
<dbReference type="GO" id="GO:0006189">
    <property type="term" value="P:'de novo' IMP biosynthetic process"/>
    <property type="evidence" value="ECO:0007669"/>
    <property type="project" value="UniProtKB-UniRule"/>
</dbReference>
<dbReference type="CDD" id="cd02203">
    <property type="entry name" value="PurL_repeat1"/>
    <property type="match status" value="1"/>
</dbReference>
<dbReference type="CDD" id="cd02204">
    <property type="entry name" value="PurL_repeat2"/>
    <property type="match status" value="1"/>
</dbReference>
<dbReference type="FunFam" id="3.30.1330.10:FF:000004">
    <property type="entry name" value="Phosphoribosylformylglycinamidine synthase subunit PurL"/>
    <property type="match status" value="1"/>
</dbReference>
<dbReference type="Gene3D" id="3.90.650.10">
    <property type="entry name" value="PurM-like C-terminal domain"/>
    <property type="match status" value="2"/>
</dbReference>
<dbReference type="Gene3D" id="3.30.1330.10">
    <property type="entry name" value="PurM-like, N-terminal domain"/>
    <property type="match status" value="2"/>
</dbReference>
<dbReference type="HAMAP" id="MF_00420">
    <property type="entry name" value="PurL_2"/>
    <property type="match status" value="1"/>
</dbReference>
<dbReference type="InterPro" id="IPR010074">
    <property type="entry name" value="PRibForGlyAmidine_synth_PurL"/>
</dbReference>
<dbReference type="InterPro" id="IPR041609">
    <property type="entry name" value="PurL_linker"/>
</dbReference>
<dbReference type="InterPro" id="IPR010918">
    <property type="entry name" value="PurM-like_C_dom"/>
</dbReference>
<dbReference type="InterPro" id="IPR036676">
    <property type="entry name" value="PurM-like_C_sf"/>
</dbReference>
<dbReference type="InterPro" id="IPR016188">
    <property type="entry name" value="PurM-like_N"/>
</dbReference>
<dbReference type="InterPro" id="IPR036921">
    <property type="entry name" value="PurM-like_N_sf"/>
</dbReference>
<dbReference type="NCBIfam" id="TIGR01736">
    <property type="entry name" value="FGAM_synth_II"/>
    <property type="match status" value="1"/>
</dbReference>
<dbReference type="NCBIfam" id="NF002290">
    <property type="entry name" value="PRK01213.1"/>
    <property type="match status" value="1"/>
</dbReference>
<dbReference type="PANTHER" id="PTHR43555">
    <property type="entry name" value="PHOSPHORIBOSYLFORMYLGLYCINAMIDINE SYNTHASE SUBUNIT PURL"/>
    <property type="match status" value="1"/>
</dbReference>
<dbReference type="PANTHER" id="PTHR43555:SF1">
    <property type="entry name" value="PHOSPHORIBOSYLFORMYLGLYCINAMIDINE SYNTHASE SUBUNIT PURL"/>
    <property type="match status" value="1"/>
</dbReference>
<dbReference type="Pfam" id="PF00586">
    <property type="entry name" value="AIRS"/>
    <property type="match status" value="2"/>
</dbReference>
<dbReference type="Pfam" id="PF02769">
    <property type="entry name" value="AIRS_C"/>
    <property type="match status" value="2"/>
</dbReference>
<dbReference type="Pfam" id="PF18072">
    <property type="entry name" value="FGAR-AT_linker"/>
    <property type="match status" value="1"/>
</dbReference>
<dbReference type="PIRSF" id="PIRSF001587">
    <property type="entry name" value="FGAM_synthase_II"/>
    <property type="match status" value="1"/>
</dbReference>
<dbReference type="SUPFAM" id="SSF56042">
    <property type="entry name" value="PurM C-terminal domain-like"/>
    <property type="match status" value="2"/>
</dbReference>
<dbReference type="SUPFAM" id="SSF55326">
    <property type="entry name" value="PurM N-terminal domain-like"/>
    <property type="match status" value="2"/>
</dbReference>
<proteinExistence type="inferred from homology"/>
<accession>Q053V5</accession>